<sequence>MSERAPVVTIDGPSGAGKGTISQLLAQHLGWQLLDSGAIYRVLALAAIHHNVELENEESITLLAAHLDVKFLTGNDTDPVQVILEGEDVTTDIRTQECSNAASKVAAFPRVREALLRRQRAFKTAPGLIADGRDMGTVVFPSAPAKLYLTASAEERAQRRYNQLQDKGFDVNIERLLSEIIERDDRDMNRPVAPLVPAEDALIIDTSGKGIDEVLALALNFINQKLSDTN</sequence>
<keyword id="KW-0067">ATP-binding</keyword>
<keyword id="KW-0963">Cytoplasm</keyword>
<keyword id="KW-0418">Kinase</keyword>
<keyword id="KW-0547">Nucleotide-binding</keyword>
<keyword id="KW-0808">Transferase</keyword>
<proteinExistence type="inferred from homology"/>
<organism>
    <name type="scientific">Shewanella baltica (strain OS195)</name>
    <dbReference type="NCBI Taxonomy" id="399599"/>
    <lineage>
        <taxon>Bacteria</taxon>
        <taxon>Pseudomonadati</taxon>
        <taxon>Pseudomonadota</taxon>
        <taxon>Gammaproteobacteria</taxon>
        <taxon>Alteromonadales</taxon>
        <taxon>Shewanellaceae</taxon>
        <taxon>Shewanella</taxon>
    </lineage>
</organism>
<feature type="chain" id="PRO_1000078349" description="Cytidylate kinase">
    <location>
        <begin position="1"/>
        <end position="230"/>
    </location>
</feature>
<feature type="binding site" evidence="1">
    <location>
        <begin position="12"/>
        <end position="20"/>
    </location>
    <ligand>
        <name>ATP</name>
        <dbReference type="ChEBI" id="CHEBI:30616"/>
    </ligand>
</feature>
<gene>
    <name evidence="1" type="primary">cmk</name>
    <name type="ordered locus">Sbal195_2397</name>
</gene>
<comment type="catalytic activity">
    <reaction evidence="1">
        <text>CMP + ATP = CDP + ADP</text>
        <dbReference type="Rhea" id="RHEA:11600"/>
        <dbReference type="ChEBI" id="CHEBI:30616"/>
        <dbReference type="ChEBI" id="CHEBI:58069"/>
        <dbReference type="ChEBI" id="CHEBI:60377"/>
        <dbReference type="ChEBI" id="CHEBI:456216"/>
        <dbReference type="EC" id="2.7.4.25"/>
    </reaction>
</comment>
<comment type="catalytic activity">
    <reaction evidence="1">
        <text>dCMP + ATP = dCDP + ADP</text>
        <dbReference type="Rhea" id="RHEA:25094"/>
        <dbReference type="ChEBI" id="CHEBI:30616"/>
        <dbReference type="ChEBI" id="CHEBI:57566"/>
        <dbReference type="ChEBI" id="CHEBI:58593"/>
        <dbReference type="ChEBI" id="CHEBI:456216"/>
        <dbReference type="EC" id="2.7.4.25"/>
    </reaction>
</comment>
<comment type="subcellular location">
    <subcellularLocation>
        <location evidence="1">Cytoplasm</location>
    </subcellularLocation>
</comment>
<comment type="similarity">
    <text evidence="1">Belongs to the cytidylate kinase family. Type 1 subfamily.</text>
</comment>
<name>KCY_SHEB9</name>
<accession>A9L2X6</accession>
<dbReference type="EC" id="2.7.4.25" evidence="1"/>
<dbReference type="EMBL" id="CP000891">
    <property type="protein sequence ID" value="ABX49565.1"/>
    <property type="molecule type" value="Genomic_DNA"/>
</dbReference>
<dbReference type="RefSeq" id="WP_006081720.1">
    <property type="nucleotide sequence ID" value="NC_009997.1"/>
</dbReference>
<dbReference type="SMR" id="A9L2X6"/>
<dbReference type="GeneID" id="11772514"/>
<dbReference type="KEGG" id="sbn:Sbal195_2397"/>
<dbReference type="HOGENOM" id="CLU_079959_2_0_6"/>
<dbReference type="Proteomes" id="UP000000770">
    <property type="component" value="Chromosome"/>
</dbReference>
<dbReference type="GO" id="GO:0005829">
    <property type="term" value="C:cytosol"/>
    <property type="evidence" value="ECO:0007669"/>
    <property type="project" value="TreeGrafter"/>
</dbReference>
<dbReference type="GO" id="GO:0005524">
    <property type="term" value="F:ATP binding"/>
    <property type="evidence" value="ECO:0007669"/>
    <property type="project" value="UniProtKB-UniRule"/>
</dbReference>
<dbReference type="GO" id="GO:0036430">
    <property type="term" value="F:CMP kinase activity"/>
    <property type="evidence" value="ECO:0007669"/>
    <property type="project" value="RHEA"/>
</dbReference>
<dbReference type="GO" id="GO:0036431">
    <property type="term" value="F:dCMP kinase activity"/>
    <property type="evidence" value="ECO:0007669"/>
    <property type="project" value="RHEA"/>
</dbReference>
<dbReference type="GO" id="GO:0015949">
    <property type="term" value="P:nucleobase-containing small molecule interconversion"/>
    <property type="evidence" value="ECO:0007669"/>
    <property type="project" value="TreeGrafter"/>
</dbReference>
<dbReference type="GO" id="GO:0006220">
    <property type="term" value="P:pyrimidine nucleotide metabolic process"/>
    <property type="evidence" value="ECO:0007669"/>
    <property type="project" value="UniProtKB-UniRule"/>
</dbReference>
<dbReference type="CDD" id="cd02020">
    <property type="entry name" value="CMPK"/>
    <property type="match status" value="1"/>
</dbReference>
<dbReference type="FunFam" id="3.40.50.300:FF:000262">
    <property type="entry name" value="Cytidylate kinase"/>
    <property type="match status" value="1"/>
</dbReference>
<dbReference type="Gene3D" id="3.40.50.300">
    <property type="entry name" value="P-loop containing nucleotide triphosphate hydrolases"/>
    <property type="match status" value="1"/>
</dbReference>
<dbReference type="HAMAP" id="MF_00238">
    <property type="entry name" value="Cytidyl_kinase_type1"/>
    <property type="match status" value="1"/>
</dbReference>
<dbReference type="InterPro" id="IPR003136">
    <property type="entry name" value="Cytidylate_kin"/>
</dbReference>
<dbReference type="InterPro" id="IPR011994">
    <property type="entry name" value="Cytidylate_kinase_dom"/>
</dbReference>
<dbReference type="InterPro" id="IPR027417">
    <property type="entry name" value="P-loop_NTPase"/>
</dbReference>
<dbReference type="NCBIfam" id="TIGR00017">
    <property type="entry name" value="cmk"/>
    <property type="match status" value="1"/>
</dbReference>
<dbReference type="PANTHER" id="PTHR21299:SF2">
    <property type="entry name" value="CYTIDYLATE KINASE"/>
    <property type="match status" value="1"/>
</dbReference>
<dbReference type="PANTHER" id="PTHR21299">
    <property type="entry name" value="CYTIDYLATE KINASE/PANTOATE-BETA-ALANINE LIGASE"/>
    <property type="match status" value="1"/>
</dbReference>
<dbReference type="Pfam" id="PF02224">
    <property type="entry name" value="Cytidylate_kin"/>
    <property type="match status" value="1"/>
</dbReference>
<dbReference type="SUPFAM" id="SSF52540">
    <property type="entry name" value="P-loop containing nucleoside triphosphate hydrolases"/>
    <property type="match status" value="1"/>
</dbReference>
<protein>
    <recommendedName>
        <fullName evidence="1">Cytidylate kinase</fullName>
        <shortName evidence="1">CK</shortName>
        <ecNumber evidence="1">2.7.4.25</ecNumber>
    </recommendedName>
    <alternativeName>
        <fullName evidence="1">Cytidine monophosphate kinase</fullName>
        <shortName evidence="1">CMP kinase</shortName>
    </alternativeName>
</protein>
<evidence type="ECO:0000255" key="1">
    <source>
        <dbReference type="HAMAP-Rule" id="MF_00238"/>
    </source>
</evidence>
<reference key="1">
    <citation type="submission" date="2007-11" db="EMBL/GenBank/DDBJ databases">
        <title>Complete sequence of chromosome of Shewanella baltica OS195.</title>
        <authorList>
            <consortium name="US DOE Joint Genome Institute"/>
            <person name="Copeland A."/>
            <person name="Lucas S."/>
            <person name="Lapidus A."/>
            <person name="Barry K."/>
            <person name="Glavina del Rio T."/>
            <person name="Dalin E."/>
            <person name="Tice H."/>
            <person name="Pitluck S."/>
            <person name="Chain P."/>
            <person name="Malfatti S."/>
            <person name="Shin M."/>
            <person name="Vergez L."/>
            <person name="Schmutz J."/>
            <person name="Larimer F."/>
            <person name="Land M."/>
            <person name="Hauser L."/>
            <person name="Kyrpides N."/>
            <person name="Kim E."/>
            <person name="Brettar I."/>
            <person name="Rodrigues J."/>
            <person name="Konstantinidis K."/>
            <person name="Klappenbach J."/>
            <person name="Hofle M."/>
            <person name="Tiedje J."/>
            <person name="Richardson P."/>
        </authorList>
    </citation>
    <scope>NUCLEOTIDE SEQUENCE [LARGE SCALE GENOMIC DNA]</scope>
    <source>
        <strain>OS195</strain>
    </source>
</reference>